<sequence length="376" mass="41792">MGDEDIAALVVDNGSGMCKAGFAGDDAPRAVFPSIVGRPRHQGVMVGMGQKDSYVGDEAQSKRGILTLKYPIEHGIVTNWDDMEKIWHHTFYNELRVAPEEHPVLLTEAPLNPKANREKMTQIMFETFNSPAMYVAIQAVLSLYASGRTTGIVLDSGDGVSHTVPIYEGYALPHAIMRLDLAGRDLTDYLMKILTERGYSFTTTAEREIVRDIKEKLCYVALDFEQEMTTAASSSSLEKSYELPDGQVITIGNERFRCPEAMFQPSFLGMESSGIHETSYNSIMKCDVDIRKDLYANIVLSGGTTMFPGIADRMQKEVTALAPPTMKIKVIAPPERKYSVWIGGSILASLSTFQQMWISKQEYDESGPSIVHRKCF</sequence>
<organism>
    <name type="scientific">Magallana gigas</name>
    <name type="common">Pacific oyster</name>
    <name type="synonym">Crassostrea gigas</name>
    <dbReference type="NCBI Taxonomy" id="29159"/>
    <lineage>
        <taxon>Eukaryota</taxon>
        <taxon>Metazoa</taxon>
        <taxon>Spiralia</taxon>
        <taxon>Lophotrochozoa</taxon>
        <taxon>Mollusca</taxon>
        <taxon>Bivalvia</taxon>
        <taxon>Autobranchia</taxon>
        <taxon>Pteriomorphia</taxon>
        <taxon>Ostreida</taxon>
        <taxon>Ostreoidea</taxon>
        <taxon>Ostreidae</taxon>
        <taxon>Magallana</taxon>
    </lineage>
</organism>
<comment type="function">
    <text>Actins are highly conserved proteins that are involved in various types of cell motility and are ubiquitously expressed in all eukaryotic cells.</text>
</comment>
<comment type="catalytic activity">
    <reaction evidence="1">
        <text>ATP + H2O = ADP + phosphate + H(+)</text>
        <dbReference type="Rhea" id="RHEA:13065"/>
        <dbReference type="ChEBI" id="CHEBI:15377"/>
        <dbReference type="ChEBI" id="CHEBI:15378"/>
        <dbReference type="ChEBI" id="CHEBI:30616"/>
        <dbReference type="ChEBI" id="CHEBI:43474"/>
        <dbReference type="ChEBI" id="CHEBI:456216"/>
    </reaction>
</comment>
<comment type="subcellular location">
    <subcellularLocation>
        <location>Cytoplasm</location>
        <location>Cytoskeleton</location>
    </subcellularLocation>
</comment>
<comment type="similarity">
    <text evidence="2">Belongs to the actin family.</text>
</comment>
<protein>
    <recommendedName>
        <fullName>Actin</fullName>
        <ecNumber evidence="1">3.6.4.-</ecNumber>
    </recommendedName>
</protein>
<keyword id="KW-0067">ATP-binding</keyword>
<keyword id="KW-0963">Cytoplasm</keyword>
<keyword id="KW-0206">Cytoskeleton</keyword>
<keyword id="KW-0378">Hydrolase</keyword>
<keyword id="KW-0547">Nucleotide-binding</keyword>
<keyword id="KW-1185">Reference proteome</keyword>
<evidence type="ECO:0000250" key="1">
    <source>
        <dbReference type="UniProtKB" id="P68137"/>
    </source>
</evidence>
<evidence type="ECO:0000305" key="2"/>
<dbReference type="EC" id="3.6.4.-" evidence="1"/>
<dbReference type="EMBL" id="AF026063">
    <property type="protein sequence ID" value="AAB81845.1"/>
    <property type="molecule type" value="mRNA"/>
</dbReference>
<dbReference type="RefSeq" id="NP_001295788.1">
    <property type="nucleotide sequence ID" value="NM_001308859.1"/>
</dbReference>
<dbReference type="SMR" id="O17320"/>
<dbReference type="GeneID" id="105340469"/>
<dbReference type="KEGG" id="crg:105340469"/>
<dbReference type="HOGENOM" id="CLU_027965_0_2_1"/>
<dbReference type="InParanoid" id="O17320"/>
<dbReference type="OMA" id="STFQQKE"/>
<dbReference type="OrthoDB" id="10249208at2759"/>
<dbReference type="Proteomes" id="UP000005408">
    <property type="component" value="Unplaced"/>
</dbReference>
<dbReference type="GO" id="GO:0005737">
    <property type="term" value="C:cytoplasm"/>
    <property type="evidence" value="ECO:0007669"/>
    <property type="project" value="UniProtKB-KW"/>
</dbReference>
<dbReference type="GO" id="GO:0005856">
    <property type="term" value="C:cytoskeleton"/>
    <property type="evidence" value="ECO:0007669"/>
    <property type="project" value="UniProtKB-SubCell"/>
</dbReference>
<dbReference type="GO" id="GO:0005524">
    <property type="term" value="F:ATP binding"/>
    <property type="evidence" value="ECO:0007669"/>
    <property type="project" value="UniProtKB-KW"/>
</dbReference>
<dbReference type="GO" id="GO:0016787">
    <property type="term" value="F:hydrolase activity"/>
    <property type="evidence" value="ECO:0007669"/>
    <property type="project" value="UniProtKB-KW"/>
</dbReference>
<dbReference type="CDD" id="cd10224">
    <property type="entry name" value="ASKHA_NBD_actin"/>
    <property type="match status" value="1"/>
</dbReference>
<dbReference type="FunFam" id="3.30.420.40:FF:000131">
    <property type="entry name" value="Actin, alpha skeletal muscle"/>
    <property type="match status" value="1"/>
</dbReference>
<dbReference type="FunFam" id="3.30.420.40:FF:000291">
    <property type="entry name" value="Actin, alpha skeletal muscle"/>
    <property type="match status" value="1"/>
</dbReference>
<dbReference type="FunFam" id="3.90.640.10:FF:000047">
    <property type="entry name" value="Actin, alpha skeletal muscle"/>
    <property type="match status" value="1"/>
</dbReference>
<dbReference type="FunFam" id="3.30.420.40:FF:000058">
    <property type="entry name" value="Putative actin-related protein 5"/>
    <property type="match status" value="1"/>
</dbReference>
<dbReference type="Gene3D" id="3.30.420.40">
    <property type="match status" value="2"/>
</dbReference>
<dbReference type="Gene3D" id="3.90.640.10">
    <property type="entry name" value="Actin, Chain A, domain 4"/>
    <property type="match status" value="1"/>
</dbReference>
<dbReference type="InterPro" id="IPR004000">
    <property type="entry name" value="Actin"/>
</dbReference>
<dbReference type="InterPro" id="IPR020902">
    <property type="entry name" value="Actin/actin-like_CS"/>
</dbReference>
<dbReference type="InterPro" id="IPR004001">
    <property type="entry name" value="Actin_CS"/>
</dbReference>
<dbReference type="InterPro" id="IPR043129">
    <property type="entry name" value="ATPase_NBD"/>
</dbReference>
<dbReference type="PANTHER" id="PTHR11937">
    <property type="entry name" value="ACTIN"/>
    <property type="match status" value="1"/>
</dbReference>
<dbReference type="Pfam" id="PF00022">
    <property type="entry name" value="Actin"/>
    <property type="match status" value="1"/>
</dbReference>
<dbReference type="PRINTS" id="PR00190">
    <property type="entry name" value="ACTIN"/>
</dbReference>
<dbReference type="SMART" id="SM00268">
    <property type="entry name" value="ACTIN"/>
    <property type="match status" value="1"/>
</dbReference>
<dbReference type="SUPFAM" id="SSF53067">
    <property type="entry name" value="Actin-like ATPase domain"/>
    <property type="match status" value="2"/>
</dbReference>
<dbReference type="PROSITE" id="PS00406">
    <property type="entry name" value="ACTINS_1"/>
    <property type="match status" value="1"/>
</dbReference>
<dbReference type="PROSITE" id="PS00432">
    <property type="entry name" value="ACTINS_2"/>
    <property type="match status" value="1"/>
</dbReference>
<dbReference type="PROSITE" id="PS01132">
    <property type="entry name" value="ACTINS_ACT_LIKE"/>
    <property type="match status" value="1"/>
</dbReference>
<name>ACT_MAGGI</name>
<reference key="1">
    <citation type="submission" date="1997-09" db="EMBL/GenBank/DDBJ databases">
        <authorList>
            <person name="Cadoret J.P."/>
            <person name="Lardans V."/>
            <person name="Boulo V."/>
        </authorList>
    </citation>
    <scope>NUCLEOTIDE SEQUENCE [MRNA]</scope>
</reference>
<feature type="chain" id="PRO_0000088915" description="Actin">
    <location>
        <begin position="1"/>
        <end position="376"/>
    </location>
</feature>
<accession>O17320</accession>
<proteinExistence type="evidence at transcript level"/>